<accession>Q0RLT6</accession>
<reference key="1">
    <citation type="journal article" date="2007" name="Genome Res.">
        <title>Genome characteristics of facultatively symbiotic Frankia sp. strains reflect host range and host plant biogeography.</title>
        <authorList>
            <person name="Normand P."/>
            <person name="Lapierre P."/>
            <person name="Tisa L.S."/>
            <person name="Gogarten J.P."/>
            <person name="Alloisio N."/>
            <person name="Bagnarol E."/>
            <person name="Bassi C.A."/>
            <person name="Berry A.M."/>
            <person name="Bickhart D.M."/>
            <person name="Choisne N."/>
            <person name="Couloux A."/>
            <person name="Cournoyer B."/>
            <person name="Cruveiller S."/>
            <person name="Daubin V."/>
            <person name="Demange N."/>
            <person name="Francino M.P."/>
            <person name="Goltsman E."/>
            <person name="Huang Y."/>
            <person name="Kopp O.R."/>
            <person name="Labarre L."/>
            <person name="Lapidus A."/>
            <person name="Lavire C."/>
            <person name="Marechal J."/>
            <person name="Martinez M."/>
            <person name="Mastronunzio J.E."/>
            <person name="Mullin B.C."/>
            <person name="Niemann J."/>
            <person name="Pujic P."/>
            <person name="Rawnsley T."/>
            <person name="Rouy Z."/>
            <person name="Schenowitz C."/>
            <person name="Sellstedt A."/>
            <person name="Tavares F."/>
            <person name="Tomkins J.P."/>
            <person name="Vallenet D."/>
            <person name="Valverde C."/>
            <person name="Wall L.G."/>
            <person name="Wang Y."/>
            <person name="Medigue C."/>
            <person name="Benson D.R."/>
        </authorList>
    </citation>
    <scope>NUCLEOTIDE SEQUENCE [LARGE SCALE GENOMIC DNA]</scope>
    <source>
        <strain>DSM 45986 / CECT 9034 / ACN14a</strain>
    </source>
</reference>
<sequence>MTMPFGYASPEQQVRDKSEYARKGIARGRSVVVITYADGILFVAENPSATLHKISEIYDRIAFAAVGKYNEFENLRTAGIRLMDSRGYMYDRRDVTSRALANAYAQTLGAIFTESVKPYEVEIVVAEVGPTTDDDQIYKLTFDGSIADERGFVAIGGASDQVTTSLKEHHRDGQPLADALRVAVQALTVSVPPGLPQNGERVLTAANLEVGMLDRTRARRQFKRIAGPALAELLAQTATSS</sequence>
<name>PSA_FRAAA</name>
<feature type="chain" id="PRO_0000397137" description="Proteasome subunit alpha">
    <location>
        <begin position="1"/>
        <end position="241"/>
    </location>
</feature>
<proteinExistence type="inferred from homology"/>
<protein>
    <recommendedName>
        <fullName evidence="1">Proteasome subunit alpha</fullName>
    </recommendedName>
    <alternativeName>
        <fullName evidence="1">20S proteasome alpha subunit</fullName>
    </alternativeName>
    <alternativeName>
        <fullName evidence="1">Proteasome core protein PrcA</fullName>
    </alternativeName>
</protein>
<evidence type="ECO:0000255" key="1">
    <source>
        <dbReference type="HAMAP-Rule" id="MF_00289"/>
    </source>
</evidence>
<gene>
    <name evidence="1" type="primary">prcA</name>
    <name type="ordered locus">FRAAL2874</name>
</gene>
<comment type="function">
    <text evidence="1">Component of the proteasome core, a large protease complex with broad specificity involved in protein degradation.</text>
</comment>
<comment type="activity regulation">
    <text evidence="1">The formation of the proteasomal ATPase ARC-20S proteasome complex, likely via the docking of the C-termini of ARC into the intersubunit pockets in the alpha-rings, may trigger opening of the gate for substrate entry. Interconversion between the open-gate and close-gate conformations leads to a dynamic regulation of the 20S proteasome proteolysis activity.</text>
</comment>
<comment type="pathway">
    <text evidence="1">Protein degradation; proteasomal Pup-dependent pathway.</text>
</comment>
<comment type="subunit">
    <text evidence="1">The 20S proteasome core is composed of 14 alpha and 14 beta subunits that assemble into four stacked heptameric rings, resulting in a barrel-shaped structure. The two inner rings, each composed of seven catalytic beta subunits, are sandwiched by two outer rings, each composed of seven alpha subunits. The catalytic chamber with the active sites is on the inside of the barrel. Has a gated structure, the ends of the cylinder being occluded by the N-termini of the alpha-subunits. Is capped by the proteasome-associated ATPase, ARC.</text>
</comment>
<comment type="subcellular location">
    <subcellularLocation>
        <location evidence="1">Cytoplasm</location>
    </subcellularLocation>
</comment>
<comment type="similarity">
    <text evidence="1">Belongs to the peptidase T1A family.</text>
</comment>
<dbReference type="EMBL" id="CT573213">
    <property type="protein sequence ID" value="CAJ61518.1"/>
    <property type="molecule type" value="Genomic_DNA"/>
</dbReference>
<dbReference type="RefSeq" id="WP_011604020.1">
    <property type="nucleotide sequence ID" value="NC_008278.1"/>
</dbReference>
<dbReference type="SMR" id="Q0RLT6"/>
<dbReference type="STRING" id="326424.FRAAL2874"/>
<dbReference type="MEROPS" id="T01.980"/>
<dbReference type="KEGG" id="fal:FRAAL2874"/>
<dbReference type="eggNOG" id="COG0638">
    <property type="taxonomic scope" value="Bacteria"/>
</dbReference>
<dbReference type="HOGENOM" id="CLU_071031_0_0_11"/>
<dbReference type="OrthoDB" id="9775643at2"/>
<dbReference type="UniPathway" id="UPA00997"/>
<dbReference type="Proteomes" id="UP000000657">
    <property type="component" value="Chromosome"/>
</dbReference>
<dbReference type="GO" id="GO:0005737">
    <property type="term" value="C:cytoplasm"/>
    <property type="evidence" value="ECO:0007669"/>
    <property type="project" value="UniProtKB-SubCell"/>
</dbReference>
<dbReference type="GO" id="GO:0019773">
    <property type="term" value="C:proteasome core complex, alpha-subunit complex"/>
    <property type="evidence" value="ECO:0007669"/>
    <property type="project" value="UniProtKB-UniRule"/>
</dbReference>
<dbReference type="GO" id="GO:0004298">
    <property type="term" value="F:threonine-type endopeptidase activity"/>
    <property type="evidence" value="ECO:0007669"/>
    <property type="project" value="InterPro"/>
</dbReference>
<dbReference type="GO" id="GO:0019941">
    <property type="term" value="P:modification-dependent protein catabolic process"/>
    <property type="evidence" value="ECO:0007669"/>
    <property type="project" value="UniProtKB-UniRule"/>
</dbReference>
<dbReference type="GO" id="GO:0010498">
    <property type="term" value="P:proteasomal protein catabolic process"/>
    <property type="evidence" value="ECO:0007669"/>
    <property type="project" value="UniProtKB-UniRule"/>
</dbReference>
<dbReference type="CDD" id="cd01906">
    <property type="entry name" value="proteasome_protease_HslV"/>
    <property type="match status" value="1"/>
</dbReference>
<dbReference type="Gene3D" id="3.60.20.10">
    <property type="entry name" value="Glutamine Phosphoribosylpyrophosphate, subunit 1, domain 1"/>
    <property type="match status" value="1"/>
</dbReference>
<dbReference type="HAMAP" id="MF_00289_B">
    <property type="entry name" value="Proteasome_A_B"/>
    <property type="match status" value="1"/>
</dbReference>
<dbReference type="InterPro" id="IPR029055">
    <property type="entry name" value="Ntn_hydrolases_N"/>
</dbReference>
<dbReference type="InterPro" id="IPR050115">
    <property type="entry name" value="Proteasome_alpha"/>
</dbReference>
<dbReference type="InterPro" id="IPR023332">
    <property type="entry name" value="Proteasome_alpha-type"/>
</dbReference>
<dbReference type="InterPro" id="IPR022296">
    <property type="entry name" value="Proteasome_asu_bac"/>
</dbReference>
<dbReference type="InterPro" id="IPR001353">
    <property type="entry name" value="Proteasome_sua/b"/>
</dbReference>
<dbReference type="NCBIfam" id="TIGR03691">
    <property type="entry name" value="20S_bact_alpha"/>
    <property type="match status" value="1"/>
</dbReference>
<dbReference type="PANTHER" id="PTHR11599">
    <property type="entry name" value="PROTEASOME SUBUNIT ALPHA/BETA"/>
    <property type="match status" value="1"/>
</dbReference>
<dbReference type="Pfam" id="PF00227">
    <property type="entry name" value="Proteasome"/>
    <property type="match status" value="1"/>
</dbReference>
<dbReference type="SUPFAM" id="SSF56235">
    <property type="entry name" value="N-terminal nucleophile aminohydrolases (Ntn hydrolases)"/>
    <property type="match status" value="1"/>
</dbReference>
<dbReference type="PROSITE" id="PS51475">
    <property type="entry name" value="PROTEASOME_ALPHA_2"/>
    <property type="match status" value="1"/>
</dbReference>
<organism>
    <name type="scientific">Frankia alni (strain DSM 45986 / CECT 9034 / ACN14a)</name>
    <dbReference type="NCBI Taxonomy" id="326424"/>
    <lineage>
        <taxon>Bacteria</taxon>
        <taxon>Bacillati</taxon>
        <taxon>Actinomycetota</taxon>
        <taxon>Actinomycetes</taxon>
        <taxon>Frankiales</taxon>
        <taxon>Frankiaceae</taxon>
        <taxon>Frankia</taxon>
    </lineage>
</organism>
<keyword id="KW-0963">Cytoplasm</keyword>
<keyword id="KW-0647">Proteasome</keyword>
<keyword id="KW-1185">Reference proteome</keyword>